<dbReference type="EMBL" id="CP000712">
    <property type="protein sequence ID" value="ABQ77390.1"/>
    <property type="molecule type" value="Genomic_DNA"/>
</dbReference>
<dbReference type="KEGG" id="ppf:Pput_1229"/>
<dbReference type="eggNOG" id="COG3158">
    <property type="taxonomic scope" value="Bacteria"/>
</dbReference>
<dbReference type="HOGENOM" id="CLU_008142_4_2_6"/>
<dbReference type="GO" id="GO:0005886">
    <property type="term" value="C:plasma membrane"/>
    <property type="evidence" value="ECO:0007669"/>
    <property type="project" value="UniProtKB-SubCell"/>
</dbReference>
<dbReference type="GO" id="GO:0015079">
    <property type="term" value="F:potassium ion transmembrane transporter activity"/>
    <property type="evidence" value="ECO:0007669"/>
    <property type="project" value="UniProtKB-UniRule"/>
</dbReference>
<dbReference type="GO" id="GO:0015293">
    <property type="term" value="F:symporter activity"/>
    <property type="evidence" value="ECO:0007669"/>
    <property type="project" value="UniProtKB-UniRule"/>
</dbReference>
<dbReference type="HAMAP" id="MF_01522">
    <property type="entry name" value="Kup"/>
    <property type="match status" value="1"/>
</dbReference>
<dbReference type="InterPro" id="IPR003855">
    <property type="entry name" value="K+_transporter"/>
</dbReference>
<dbReference type="InterPro" id="IPR053952">
    <property type="entry name" value="K_trans_C"/>
</dbReference>
<dbReference type="InterPro" id="IPR053951">
    <property type="entry name" value="K_trans_N"/>
</dbReference>
<dbReference type="InterPro" id="IPR023051">
    <property type="entry name" value="Kup"/>
</dbReference>
<dbReference type="PANTHER" id="PTHR30540:SF79">
    <property type="entry name" value="LOW AFFINITY POTASSIUM TRANSPORT SYSTEM PROTEIN KUP"/>
    <property type="match status" value="1"/>
</dbReference>
<dbReference type="PANTHER" id="PTHR30540">
    <property type="entry name" value="OSMOTIC STRESS POTASSIUM TRANSPORTER"/>
    <property type="match status" value="1"/>
</dbReference>
<dbReference type="Pfam" id="PF02705">
    <property type="entry name" value="K_trans"/>
    <property type="match status" value="1"/>
</dbReference>
<dbReference type="Pfam" id="PF22776">
    <property type="entry name" value="K_trans_C"/>
    <property type="match status" value="1"/>
</dbReference>
<evidence type="ECO:0000255" key="1">
    <source>
        <dbReference type="HAMAP-Rule" id="MF_01522"/>
    </source>
</evidence>
<name>KUP_PSEP1</name>
<feature type="chain" id="PRO_0000315989" description="Probable potassium transport system protein Kup">
    <location>
        <begin position="1"/>
        <end position="636"/>
    </location>
</feature>
<feature type="transmembrane region" description="Helical" evidence="1">
    <location>
        <begin position="22"/>
        <end position="42"/>
    </location>
</feature>
<feature type="transmembrane region" description="Helical" evidence="1">
    <location>
        <begin position="64"/>
        <end position="84"/>
    </location>
</feature>
<feature type="transmembrane region" description="Helical" evidence="1">
    <location>
        <begin position="115"/>
        <end position="135"/>
    </location>
</feature>
<feature type="transmembrane region" description="Helical" evidence="1">
    <location>
        <begin position="150"/>
        <end position="170"/>
    </location>
</feature>
<feature type="transmembrane region" description="Helical" evidence="1">
    <location>
        <begin position="182"/>
        <end position="202"/>
    </location>
</feature>
<feature type="transmembrane region" description="Helical" evidence="1">
    <location>
        <begin position="220"/>
        <end position="240"/>
    </location>
</feature>
<feature type="transmembrane region" description="Helical" evidence="1">
    <location>
        <begin position="261"/>
        <end position="281"/>
    </location>
</feature>
<feature type="transmembrane region" description="Helical" evidence="1">
    <location>
        <begin position="293"/>
        <end position="313"/>
    </location>
</feature>
<feature type="transmembrane region" description="Helical" evidence="1">
    <location>
        <begin position="351"/>
        <end position="371"/>
    </location>
</feature>
<feature type="transmembrane region" description="Helical" evidence="1">
    <location>
        <begin position="383"/>
        <end position="403"/>
    </location>
</feature>
<feature type="transmembrane region" description="Helical" evidence="1">
    <location>
        <begin position="408"/>
        <end position="428"/>
    </location>
</feature>
<feature type="transmembrane region" description="Helical" evidence="1">
    <location>
        <begin position="433"/>
        <end position="453"/>
    </location>
</feature>
<proteinExistence type="inferred from homology"/>
<accession>A5VZT0</accession>
<protein>
    <recommendedName>
        <fullName evidence="1">Probable potassium transport system protein Kup</fullName>
    </recommendedName>
</protein>
<keyword id="KW-0997">Cell inner membrane</keyword>
<keyword id="KW-1003">Cell membrane</keyword>
<keyword id="KW-0406">Ion transport</keyword>
<keyword id="KW-0472">Membrane</keyword>
<keyword id="KW-0630">Potassium</keyword>
<keyword id="KW-0633">Potassium transport</keyword>
<keyword id="KW-0769">Symport</keyword>
<keyword id="KW-0812">Transmembrane</keyword>
<keyword id="KW-1133">Transmembrane helix</keyword>
<keyword id="KW-0813">Transport</keyword>
<organism>
    <name type="scientific">Pseudomonas putida (strain ATCC 700007 / DSM 6899 / JCM 31910 / BCRC 17059 / LMG 24140 / F1)</name>
    <dbReference type="NCBI Taxonomy" id="351746"/>
    <lineage>
        <taxon>Bacteria</taxon>
        <taxon>Pseudomonadati</taxon>
        <taxon>Pseudomonadota</taxon>
        <taxon>Gammaproteobacteria</taxon>
        <taxon>Pseudomonadales</taxon>
        <taxon>Pseudomonadaceae</taxon>
        <taxon>Pseudomonas</taxon>
    </lineage>
</organism>
<sequence length="636" mass="68595">MVQASSHAEGGHEGKQGASRSVGLLVAAVGVVYGDIGTSPLYTLKEVFTGGYGVSVNHDGVLGILSLILWSLLWVVSFKYVMFILRADNQGEGGTMALTALARRATAAYPRLRTLMVICGLIGASLFYGDSMITPAVSVLSAVEGMGLAFDGIDHWVVPISLVVLVALFLVQQHGTEKIGKLFGPIMVTWFVALGALGVHGISQSPEVLKAFNPGWAVNFFVVHPGIGVAILGAVVLALTGAEALYADMGHFGRKPIARAWFILVLPALVLNYFGQGALLLQNPEAARNPFYLLAPGWALLPLVGLATMATVIASQAVISGAFSLTRQAIQLGYIPRMQIQHTSSDEQGQIYIGAVNWTLMVGVVLLVIGFGSSGALAAAYGVAVTGTMLMTTILVSAVMLLLWKWPPLLAVPILVGFLFVDGLFFAANVPKIVQGGAFPVLAGGVLYLLMSTWKRGKQILVERIDEGALPLPLFISSIRIQPPHRVEGTAVFLTARSDAVPHALLHNMLHNQVLHSQVVLLTVVSEDRPRVPEHERFEVEAYGDGFFRVLLHFGFMDEPDVPAALKLCHLDDLDFTPMRTTYFLSRETVIASRLEGMSRWRGNLFAFLLKNANGNLRFFNLPLNRVIELGTQVEI</sequence>
<gene>
    <name evidence="1" type="primary">kup</name>
    <name type="ordered locus">Pput_1229</name>
</gene>
<reference key="1">
    <citation type="submission" date="2007-05" db="EMBL/GenBank/DDBJ databases">
        <title>Complete sequence of Pseudomonas putida F1.</title>
        <authorList>
            <consortium name="US DOE Joint Genome Institute"/>
            <person name="Copeland A."/>
            <person name="Lucas S."/>
            <person name="Lapidus A."/>
            <person name="Barry K."/>
            <person name="Detter J.C."/>
            <person name="Glavina del Rio T."/>
            <person name="Hammon N."/>
            <person name="Israni S."/>
            <person name="Dalin E."/>
            <person name="Tice H."/>
            <person name="Pitluck S."/>
            <person name="Chain P."/>
            <person name="Malfatti S."/>
            <person name="Shin M."/>
            <person name="Vergez L."/>
            <person name="Schmutz J."/>
            <person name="Larimer F."/>
            <person name="Land M."/>
            <person name="Hauser L."/>
            <person name="Kyrpides N."/>
            <person name="Lykidis A."/>
            <person name="Parales R."/>
            <person name="Richardson P."/>
        </authorList>
    </citation>
    <scope>NUCLEOTIDE SEQUENCE [LARGE SCALE GENOMIC DNA]</scope>
    <source>
        <strain>ATCC 700007 / DSM 6899 / JCM 31910 / BCRC 17059 / LMG 24140 / F1</strain>
    </source>
</reference>
<comment type="function">
    <text evidence="1">Transport of potassium into the cell. Likely operates as a K(+):H(+) symporter.</text>
</comment>
<comment type="catalytic activity">
    <reaction evidence="1">
        <text>K(+)(in) + H(+)(in) = K(+)(out) + H(+)(out)</text>
        <dbReference type="Rhea" id="RHEA:28490"/>
        <dbReference type="ChEBI" id="CHEBI:15378"/>
        <dbReference type="ChEBI" id="CHEBI:29103"/>
    </reaction>
    <physiologicalReaction direction="right-to-left" evidence="1">
        <dbReference type="Rhea" id="RHEA:28492"/>
    </physiologicalReaction>
</comment>
<comment type="subcellular location">
    <subcellularLocation>
        <location evidence="1">Cell inner membrane</location>
        <topology evidence="1">Multi-pass membrane protein</topology>
    </subcellularLocation>
</comment>
<comment type="similarity">
    <text evidence="1">Belongs to the HAK/KUP transporter (TC 2.A.72) family.</text>
</comment>